<evidence type="ECO:0000255" key="1">
    <source>
        <dbReference type="HAMAP-Rule" id="MF_00446"/>
    </source>
</evidence>
<accession>B0RTT9</accession>
<organism>
    <name type="scientific">Xanthomonas campestris pv. campestris (strain B100)</name>
    <dbReference type="NCBI Taxonomy" id="509169"/>
    <lineage>
        <taxon>Bacteria</taxon>
        <taxon>Pseudomonadati</taxon>
        <taxon>Pseudomonadota</taxon>
        <taxon>Gammaproteobacteria</taxon>
        <taxon>Lysobacterales</taxon>
        <taxon>Lysobacteraceae</taxon>
        <taxon>Xanthomonas</taxon>
    </lineage>
</organism>
<comment type="function">
    <text evidence="1">Catalyzes the pyruvoyl-dependent decarboxylation of aspartate to produce beta-alanine.</text>
</comment>
<comment type="catalytic activity">
    <reaction evidence="1">
        <text>L-aspartate + H(+) = beta-alanine + CO2</text>
        <dbReference type="Rhea" id="RHEA:19497"/>
        <dbReference type="ChEBI" id="CHEBI:15378"/>
        <dbReference type="ChEBI" id="CHEBI:16526"/>
        <dbReference type="ChEBI" id="CHEBI:29991"/>
        <dbReference type="ChEBI" id="CHEBI:57966"/>
        <dbReference type="EC" id="4.1.1.11"/>
    </reaction>
</comment>
<comment type="cofactor">
    <cofactor evidence="1">
        <name>pyruvate</name>
        <dbReference type="ChEBI" id="CHEBI:15361"/>
    </cofactor>
    <text evidence="1">Binds 1 pyruvoyl group covalently per subunit.</text>
</comment>
<comment type="pathway">
    <text evidence="1">Cofactor biosynthesis; (R)-pantothenate biosynthesis; beta-alanine from L-aspartate: step 1/1.</text>
</comment>
<comment type="subunit">
    <text evidence="1">Heterooctamer of four alpha and four beta subunits.</text>
</comment>
<comment type="subcellular location">
    <subcellularLocation>
        <location evidence="1">Cytoplasm</location>
    </subcellularLocation>
</comment>
<comment type="PTM">
    <text evidence="1">Is synthesized initially as an inactive proenzyme, which is activated by self-cleavage at a specific serine bond to produce a beta-subunit with a hydroxyl group at its C-terminus and an alpha-subunit with a pyruvoyl group at its N-terminus.</text>
</comment>
<comment type="similarity">
    <text evidence="1">Belongs to the PanD family.</text>
</comment>
<feature type="chain" id="PRO_1000192061" description="Aspartate 1-decarboxylase beta chain" evidence="1">
    <location>
        <begin position="1"/>
        <end position="24"/>
    </location>
</feature>
<feature type="chain" id="PRO_1000192062" description="Aspartate 1-decarboxylase alpha chain" evidence="1">
    <location>
        <begin position="25"/>
        <end position="126"/>
    </location>
</feature>
<feature type="active site" description="Schiff-base intermediate with substrate; via pyruvic acid" evidence="1">
    <location>
        <position position="25"/>
    </location>
</feature>
<feature type="active site" description="Proton donor" evidence="1">
    <location>
        <position position="58"/>
    </location>
</feature>
<feature type="binding site" evidence="1">
    <location>
        <position position="57"/>
    </location>
    <ligand>
        <name>substrate</name>
    </ligand>
</feature>
<feature type="binding site" evidence="1">
    <location>
        <begin position="73"/>
        <end position="75"/>
    </location>
    <ligand>
        <name>substrate</name>
    </ligand>
</feature>
<feature type="modified residue" description="Pyruvic acid (Ser)" evidence="1">
    <location>
        <position position="25"/>
    </location>
</feature>
<protein>
    <recommendedName>
        <fullName evidence="1">Aspartate 1-decarboxylase</fullName>
        <ecNumber evidence="1">4.1.1.11</ecNumber>
    </recommendedName>
    <alternativeName>
        <fullName evidence="1">Aspartate alpha-decarboxylase</fullName>
    </alternativeName>
    <component>
        <recommendedName>
            <fullName evidence="1">Aspartate 1-decarboxylase beta chain</fullName>
        </recommendedName>
    </component>
    <component>
        <recommendedName>
            <fullName evidence="1">Aspartate 1-decarboxylase alpha chain</fullName>
        </recommendedName>
    </component>
</protein>
<name>PAND_XANCB</name>
<gene>
    <name evidence="1" type="primary">panD</name>
    <name type="ordered locus">xcc-b100_2493</name>
</gene>
<sequence length="126" mass="13590">MHLSLLKAKIHRATVTHSELNYEGSIAIDGLLLEATGIREFEQVHIWDVTNGARFSTYAIRAEEGSGIISLNGGAARHVQVGDLIIVAAFAGMSEDEAKTFKPNLVYVDAHNAISHTNHSIPTQAA</sequence>
<proteinExistence type="inferred from homology"/>
<reference key="1">
    <citation type="journal article" date="2008" name="J. Biotechnol.">
        <title>The genome of Xanthomonas campestris pv. campestris B100 and its use for the reconstruction of metabolic pathways involved in xanthan biosynthesis.</title>
        <authorList>
            <person name="Vorhoelter F.-J."/>
            <person name="Schneiker S."/>
            <person name="Goesmann A."/>
            <person name="Krause L."/>
            <person name="Bekel T."/>
            <person name="Kaiser O."/>
            <person name="Linke B."/>
            <person name="Patschkowski T."/>
            <person name="Rueckert C."/>
            <person name="Schmid J."/>
            <person name="Sidhu V.K."/>
            <person name="Sieber V."/>
            <person name="Tauch A."/>
            <person name="Watt S.A."/>
            <person name="Weisshaar B."/>
            <person name="Becker A."/>
            <person name="Niehaus K."/>
            <person name="Puehler A."/>
        </authorList>
    </citation>
    <scope>NUCLEOTIDE SEQUENCE [LARGE SCALE GENOMIC DNA]</scope>
    <source>
        <strain>B100</strain>
    </source>
</reference>
<keyword id="KW-0068">Autocatalytic cleavage</keyword>
<keyword id="KW-0963">Cytoplasm</keyword>
<keyword id="KW-0210">Decarboxylase</keyword>
<keyword id="KW-0456">Lyase</keyword>
<keyword id="KW-0566">Pantothenate biosynthesis</keyword>
<keyword id="KW-0670">Pyruvate</keyword>
<keyword id="KW-0704">Schiff base</keyword>
<keyword id="KW-0865">Zymogen</keyword>
<dbReference type="EC" id="4.1.1.11" evidence="1"/>
<dbReference type="EMBL" id="AM920689">
    <property type="protein sequence ID" value="CAP51853.1"/>
    <property type="molecule type" value="Genomic_DNA"/>
</dbReference>
<dbReference type="SMR" id="B0RTT9"/>
<dbReference type="KEGG" id="xca:xcc-b100_2493"/>
<dbReference type="HOGENOM" id="CLU_115305_2_1_6"/>
<dbReference type="UniPathway" id="UPA00028">
    <property type="reaction ID" value="UER00002"/>
</dbReference>
<dbReference type="Proteomes" id="UP000001188">
    <property type="component" value="Chromosome"/>
</dbReference>
<dbReference type="GO" id="GO:0005829">
    <property type="term" value="C:cytosol"/>
    <property type="evidence" value="ECO:0007669"/>
    <property type="project" value="TreeGrafter"/>
</dbReference>
<dbReference type="GO" id="GO:0004068">
    <property type="term" value="F:aspartate 1-decarboxylase activity"/>
    <property type="evidence" value="ECO:0007669"/>
    <property type="project" value="UniProtKB-UniRule"/>
</dbReference>
<dbReference type="GO" id="GO:0006523">
    <property type="term" value="P:alanine biosynthetic process"/>
    <property type="evidence" value="ECO:0007669"/>
    <property type="project" value="InterPro"/>
</dbReference>
<dbReference type="GO" id="GO:0015940">
    <property type="term" value="P:pantothenate biosynthetic process"/>
    <property type="evidence" value="ECO:0007669"/>
    <property type="project" value="UniProtKB-UniRule"/>
</dbReference>
<dbReference type="CDD" id="cd06919">
    <property type="entry name" value="Asp_decarbox"/>
    <property type="match status" value="1"/>
</dbReference>
<dbReference type="Gene3D" id="2.40.40.20">
    <property type="match status" value="1"/>
</dbReference>
<dbReference type="HAMAP" id="MF_00446">
    <property type="entry name" value="PanD"/>
    <property type="match status" value="1"/>
</dbReference>
<dbReference type="InterPro" id="IPR009010">
    <property type="entry name" value="Asp_de-COase-like_dom_sf"/>
</dbReference>
<dbReference type="InterPro" id="IPR003190">
    <property type="entry name" value="Asp_decarbox"/>
</dbReference>
<dbReference type="NCBIfam" id="TIGR00223">
    <property type="entry name" value="panD"/>
    <property type="match status" value="1"/>
</dbReference>
<dbReference type="PANTHER" id="PTHR21012">
    <property type="entry name" value="ASPARTATE 1-DECARBOXYLASE"/>
    <property type="match status" value="1"/>
</dbReference>
<dbReference type="PANTHER" id="PTHR21012:SF0">
    <property type="entry name" value="ASPARTATE 1-DECARBOXYLASE"/>
    <property type="match status" value="1"/>
</dbReference>
<dbReference type="Pfam" id="PF02261">
    <property type="entry name" value="Asp_decarbox"/>
    <property type="match status" value="1"/>
</dbReference>
<dbReference type="PIRSF" id="PIRSF006246">
    <property type="entry name" value="Asp_decarbox"/>
    <property type="match status" value="1"/>
</dbReference>
<dbReference type="SUPFAM" id="SSF50692">
    <property type="entry name" value="ADC-like"/>
    <property type="match status" value="1"/>
</dbReference>